<organism>
    <name type="scientific">Phyllomedusa distincta</name>
    <name type="common">Monkey frog</name>
    <dbReference type="NCBI Taxonomy" id="164618"/>
    <lineage>
        <taxon>Eukaryota</taxon>
        <taxon>Metazoa</taxon>
        <taxon>Chordata</taxon>
        <taxon>Craniata</taxon>
        <taxon>Vertebrata</taxon>
        <taxon>Euteleostomi</taxon>
        <taxon>Amphibia</taxon>
        <taxon>Batrachia</taxon>
        <taxon>Anura</taxon>
        <taxon>Neobatrachia</taxon>
        <taxon>Hyloidea</taxon>
        <taxon>Hylidae</taxon>
        <taxon>Phyllomedusinae</taxon>
        <taxon>Phyllomedusa</taxon>
    </lineage>
</organism>
<protein>
    <recommendedName>
        <fullName evidence="3">Dermaseptin-DI5</fullName>
        <shortName evidence="3">DRS-DI5</shortName>
    </recommendedName>
    <alternativeName>
        <fullName evidence="2">Dermadistinctin-Q2</fullName>
        <shortName evidence="2">DD Q2</shortName>
    </alternativeName>
</protein>
<sequence>GLWSKIKEAAKTAGLMAMGFVNDMV</sequence>
<name>DRS5_PHYDS</name>
<evidence type="ECO:0000269" key="1">
    <source>
    </source>
</evidence>
<evidence type="ECO:0000303" key="2">
    <source>
    </source>
</evidence>
<evidence type="ECO:0000303" key="3">
    <source>
    </source>
</evidence>
<evidence type="ECO:0000305" key="4"/>
<reference key="1">
    <citation type="journal article" date="1999" name="Peptides">
        <title>Antimicrobial peptides from the Brazilian frog Phyllomedusa distincta.</title>
        <authorList>
            <person name="Batista C.V.F."/>
            <person name="da Silva L.R."/>
            <person name="Sebben A."/>
            <person name="Scaloni A."/>
            <person name="Ferrara L."/>
            <person name="Paiva G.R."/>
            <person name="Olamendi-Portugal T."/>
            <person name="Possani L.D."/>
            <person name="Bloch C. Jr."/>
        </authorList>
    </citation>
    <scope>PROTEIN SEQUENCE</scope>
    <scope>FUNCTION</scope>
    <scope>SUBCELLULAR LOCATION</scope>
    <scope>TISSUE SPECIFICITY</scope>
    <scope>CIRCULAR DICHROISM ANALYSIS</scope>
    <scope>SYNTHESIS</scope>
    <source>
        <tissue>Skin secretion</tissue>
    </source>
</reference>
<reference key="2">
    <citation type="journal article" date="2008" name="Peptides">
        <title>A consistent nomenclature of antimicrobial peptides isolated from frogs of the subfamily Phyllomedusinae.</title>
        <authorList>
            <person name="Amiche M."/>
            <person name="Ladram A."/>
            <person name="Nicolas P."/>
        </authorList>
    </citation>
    <scope>NOMENCLATURE</scope>
</reference>
<feature type="peptide" id="PRO_0000043639" description="Dermaseptin-DI5">
    <location>
        <begin position="1"/>
        <end position="25"/>
    </location>
</feature>
<comment type="function">
    <text evidence="1">Antibacterial peptide with activity against Gram-positive bacteria S.aureus and E.faecalis, and Gram-negative bacteria P.aeruginosa and E.coli.</text>
</comment>
<comment type="subcellular location">
    <subcellularLocation>
        <location evidence="1">Secreted</location>
    </subcellularLocation>
</comment>
<comment type="tissue specificity">
    <text evidence="1">Expressed by the skin glands.</text>
</comment>
<comment type="similarity">
    <text evidence="4">Belongs to the frog skin active peptide (FSAP) family. Dermaseptin subfamily.</text>
</comment>
<comment type="online information" name="The antimicrobial peptide database">
    <link uri="https://wangapd3.com/database/query_output.php?ID=0969"/>
</comment>
<keyword id="KW-0878">Amphibian defense peptide</keyword>
<keyword id="KW-0044">Antibiotic</keyword>
<keyword id="KW-0929">Antimicrobial</keyword>
<keyword id="KW-0903">Direct protein sequencing</keyword>
<keyword id="KW-0964">Secreted</keyword>
<dbReference type="GO" id="GO:0005576">
    <property type="term" value="C:extracellular region"/>
    <property type="evidence" value="ECO:0007669"/>
    <property type="project" value="UniProtKB-SubCell"/>
</dbReference>
<dbReference type="GO" id="GO:0042742">
    <property type="term" value="P:defense response to bacterium"/>
    <property type="evidence" value="ECO:0007669"/>
    <property type="project" value="UniProtKB-KW"/>
</dbReference>
<dbReference type="InterPro" id="IPR022731">
    <property type="entry name" value="Dermaseptin_dom"/>
</dbReference>
<dbReference type="Pfam" id="PF12121">
    <property type="entry name" value="DD_K"/>
    <property type="match status" value="1"/>
</dbReference>
<proteinExistence type="evidence at protein level"/>
<accession>P83642</accession>